<evidence type="ECO:0000255" key="1">
    <source>
        <dbReference type="HAMAP-Rule" id="MF_04129"/>
    </source>
</evidence>
<protein>
    <recommendedName>
        <fullName evidence="1">Intermediate capsid protein VP6</fullName>
    </recommendedName>
</protein>
<sequence>MDVLYSLSKTLKDARDKIVEGTLYSNVSDLIQQFNQMIITMNGNEFQTGGIGNLPTRNWSFDFGLLGTTLLNLDANYVETARNTIDYFVDFVDNVCMDEMVRESQRNGIAPQSESLRKLSGIKFKRINFDNSSEYIENWNLQNRRQRTGFTFHKPNIFPYSASFTLNRSQPAHDNLMGTMWLNAGSEIQVAGFDYSCAINAPANIQQFEHIVQLRRVLTTATITLLPDAERFSFPRVINSADGATTWYFNPVILRPNNVEVEFLLNGQIINTYQARFGTIVARNFDTIRLSFQLMRPLNMTPSVAALFPNAQPFGHHATVGLTLRIESAICESVLADASETMLANVTSVRQEYAIPVGPVFPPGMNWTDLITNYSPSREDNLQRVFTVASIRSMLVK</sequence>
<organismHost>
    <name type="scientific">Homo sapiens</name>
    <name type="common">Human</name>
    <dbReference type="NCBI Taxonomy" id="9606"/>
</organismHost>
<dbReference type="EMBL" id="DQ146695">
    <property type="protein sequence ID" value="ABA34215.1"/>
    <property type="molecule type" value="Genomic_RNA"/>
</dbReference>
<dbReference type="EMBL" id="EF583036">
    <property type="protein sequence ID" value="ABU87845.1"/>
    <property type="molecule type" value="Genomic_RNA"/>
</dbReference>
<dbReference type="SMR" id="B1NKS8"/>
<dbReference type="Proteomes" id="UP000001459">
    <property type="component" value="Genome"/>
</dbReference>
<dbReference type="GO" id="GO:0019031">
    <property type="term" value="C:viral envelope"/>
    <property type="evidence" value="ECO:0007669"/>
    <property type="project" value="UniProtKB-UniRule"/>
</dbReference>
<dbReference type="GO" id="GO:0039626">
    <property type="term" value="C:viral intermediate capsid"/>
    <property type="evidence" value="ECO:0007669"/>
    <property type="project" value="UniProtKB-UniRule"/>
</dbReference>
<dbReference type="GO" id="GO:0046789">
    <property type="term" value="F:host cell surface receptor binding"/>
    <property type="evidence" value="ECO:0007669"/>
    <property type="project" value="UniProtKB-UniRule"/>
</dbReference>
<dbReference type="GO" id="GO:0046872">
    <property type="term" value="F:metal ion binding"/>
    <property type="evidence" value="ECO:0007669"/>
    <property type="project" value="UniProtKB-UniRule"/>
</dbReference>
<dbReference type="GO" id="GO:0005198">
    <property type="term" value="F:structural molecule activity"/>
    <property type="evidence" value="ECO:0007669"/>
    <property type="project" value="UniProtKB-UniRule"/>
</dbReference>
<dbReference type="GO" id="GO:0019064">
    <property type="term" value="P:fusion of virus membrane with host plasma membrane"/>
    <property type="evidence" value="ECO:0007669"/>
    <property type="project" value="UniProtKB-UniRule"/>
</dbReference>
<dbReference type="FunFam" id="2.60.120.170:FF:000001">
    <property type="entry name" value="Intermediate capsid protein VP6"/>
    <property type="match status" value="1"/>
</dbReference>
<dbReference type="Gene3D" id="2.60.120.170">
    <property type="match status" value="1"/>
</dbReference>
<dbReference type="Gene3D" id="1.10.1350.10">
    <property type="entry name" value="Viral capsid alpha domain"/>
    <property type="match status" value="1"/>
</dbReference>
<dbReference type="HAMAP" id="MF_04126">
    <property type="entry name" value="Rota_VP6"/>
    <property type="match status" value="1"/>
</dbReference>
<dbReference type="HAMAP" id="MF_04129">
    <property type="entry name" value="Rota_VP6_A"/>
    <property type="match status" value="1"/>
</dbReference>
<dbReference type="InterPro" id="IPR008980">
    <property type="entry name" value="Capsid_hemagglutn"/>
</dbReference>
<dbReference type="InterPro" id="IPR001385">
    <property type="entry name" value="Rotavirus_A/C_VP6"/>
</dbReference>
<dbReference type="InterPro" id="IPR008935">
    <property type="entry name" value="Virus_capsid_a-hlx_vir"/>
</dbReference>
<dbReference type="Pfam" id="PF00980">
    <property type="entry name" value="Rota_Capsid_VP6"/>
    <property type="match status" value="1"/>
</dbReference>
<dbReference type="SUPFAM" id="SSF48345">
    <property type="entry name" value="A virus capsid protein alpha-helical domain"/>
    <property type="match status" value="1"/>
</dbReference>
<dbReference type="SUPFAM" id="SSF49818">
    <property type="entry name" value="Viral protein domain"/>
    <property type="match status" value="1"/>
</dbReference>
<proteinExistence type="inferred from homology"/>
<name>VP6_ROTHL</name>
<organism>
    <name type="scientific">Rotavirus A (strain RVA/Human/Philippines/L26/1987/G12P1B[4])</name>
    <name type="common">RV-A</name>
    <dbReference type="NCBI Taxonomy" id="10953"/>
    <lineage>
        <taxon>Viruses</taxon>
        <taxon>Riboviria</taxon>
        <taxon>Orthornavirae</taxon>
        <taxon>Duplornaviricota</taxon>
        <taxon>Resentoviricetes</taxon>
        <taxon>Reovirales</taxon>
        <taxon>Sedoreoviridae</taxon>
        <taxon>Rotavirus</taxon>
        <taxon>Rotavirus A</taxon>
    </lineage>
</organism>
<accession>B1NKS8</accession>
<accession>A3DSK7</accession>
<reference key="1">
    <citation type="journal article" date="2007" name="J. Virol.">
        <title>Evolutionary history and global spread of the emerging G12 human rotaviruses.</title>
        <authorList>
            <person name="Rahman M."/>
            <person name="Matthijnssens J."/>
            <person name="Yang X."/>
            <person name="Delbeke T."/>
            <person name="Arijs I."/>
            <person name="Taniguchi K."/>
            <person name="Iturriza-Gomara M."/>
            <person name="Iftekharuddin N."/>
            <person name="Azim T."/>
            <person name="Van Ranst M."/>
        </authorList>
    </citation>
    <scope>NUCLEOTIDE SEQUENCE [GENOMIC RNA]</scope>
</reference>
<reference key="2">
    <citation type="journal article" date="2008" name="J. Virol.">
        <title>Full genome-based classification of rotaviruses reveals a common origin between human Wa-Like and porcine rotavirus strains and human DS-1-like and bovine rotavirus strains.</title>
        <authorList>
            <person name="Matthijnssens J."/>
            <person name="Ciarlet M."/>
            <person name="Heiman E.M."/>
            <person name="Arijs I."/>
            <person name="Delbeke T."/>
            <person name="McDonald S.M."/>
            <person name="Palombo E.A."/>
            <person name="Iturriza-Gomara M."/>
            <person name="Maes P."/>
            <person name="Patton J.T."/>
            <person name="Rahman M."/>
            <person name="Van Ranst M."/>
        </authorList>
    </citation>
    <scope>NUCLEOTIDE SEQUENCE [GENOMIC RNA]</scope>
</reference>
<feature type="chain" id="PRO_0000368178" description="Intermediate capsid protein VP6">
    <location>
        <begin position="1"/>
        <end position="397"/>
    </location>
</feature>
<feature type="region of interest" description="Interaction with the inner capsid protein VP2" evidence="1">
    <location>
        <begin position="62"/>
        <end position="73"/>
    </location>
</feature>
<feature type="binding site" evidence="1">
    <location>
        <position position="153"/>
    </location>
    <ligand>
        <name>Zn(2+)</name>
        <dbReference type="ChEBI" id="CHEBI:29105"/>
        <note>ligand shared between all trimeric partners</note>
    </ligand>
</feature>
<feature type="binding site" evidence="1">
    <location>
        <position position="266"/>
    </location>
    <ligand>
        <name>Ca(2+)</name>
        <dbReference type="ChEBI" id="CHEBI:29108"/>
    </ligand>
</feature>
<feature type="binding site" evidence="1">
    <location>
        <position position="286"/>
    </location>
    <ligand>
        <name>Ca(2+)</name>
        <dbReference type="ChEBI" id="CHEBI:29108"/>
    </ligand>
</feature>
<keyword id="KW-0106">Calcium</keyword>
<keyword id="KW-0167">Capsid protein</keyword>
<keyword id="KW-1154">Intermediate capsid protein</keyword>
<keyword id="KW-0479">Metal-binding</keyword>
<keyword id="KW-0832">Ubl conjugation</keyword>
<keyword id="KW-0946">Virion</keyword>
<keyword id="KW-0862">Zinc</keyword>
<comment type="function">
    <text evidence="1">Intermediate capsid protein that self assembles to form an icosahedral capsid with a T=13 symmetry, which consists of 230 trimers of VP6, with channels at each of its five-fold vertices. This capsid constitutes the middle concentric layer of the viral mature particle. The innermost VP2 capsid and the intermediate VP6 capsid remain intact following cell entry to protect the dsRNA from degradation and to prevent unfavorable antiviral responses in the host cell during all the replication cycle of the virus. Nascent transcripts are transcribed within the structural confines of this double-layered particle (DLP) and are extruded through the channels at the five-fold axes. VP6 is required for the transcription activity of the DLP.</text>
</comment>
<comment type="subunit">
    <text evidence="1">Homotrimer. Interacts with the inner capsid protein VP2. Interacts with the outer capsid glycoprotein VP7. Interacts with the outer capsid protein VP5*.</text>
</comment>
<comment type="subcellular location">
    <subcellularLocation>
        <location evidence="1">Virion</location>
    </subcellularLocation>
    <text evidence="1">Component of the intermediate capsid. Also found in spherical cytoplasmic structures, called virus factories, that appear early after infection and are the site of viral replication and packaging.</text>
</comment>
<comment type="PTM">
    <text evidence="1">The N-terminus is blocked.</text>
</comment>
<comment type="PTM">
    <text evidence="1">Sumoylated with SUMO1 and SUMO2. Sumoylation of viral proteins seems to have a positive role on viral replication.</text>
</comment>
<comment type="miscellaneous">
    <text evidence="1">The VP6 trimer contains a zinc ion located at the center of the molecule. The zinc ion is not essential for either trimerization or transcription activity of the DLP. Zinc-depleted VP6 has an increased sensitivity to proteases.</text>
</comment>
<comment type="similarity">
    <text evidence="1">Belongs to the rotavirus VP6 family.</text>
</comment>